<accession>Q9LZG7</accession>
<accession>Q8LDR4</accession>
<protein>
    <recommendedName>
        <fullName>Glutathione S-transferase U27</fullName>
        <shortName>AtGSTU27</shortName>
        <ecNumber>2.5.1.18</ecNumber>
    </recommendedName>
    <alternativeName>
        <fullName>GST class-tau member 27</fullName>
    </alternativeName>
</protein>
<feature type="chain" id="PRO_0000413572" description="Glutathione S-transferase U27">
    <location>
        <begin position="1"/>
        <end position="227"/>
    </location>
</feature>
<feature type="domain" description="GST N-terminal">
    <location>
        <begin position="4"/>
        <end position="84"/>
    </location>
</feature>
<feature type="domain" description="GST C-terminal">
    <location>
        <begin position="92"/>
        <end position="217"/>
    </location>
</feature>
<feature type="binding site" evidence="1">
    <location>
        <begin position="14"/>
        <end position="15"/>
    </location>
    <ligand>
        <name>glutathione</name>
        <dbReference type="ChEBI" id="CHEBI:57925"/>
    </ligand>
</feature>
<feature type="binding site" evidence="1">
    <location>
        <begin position="41"/>
        <end position="42"/>
    </location>
    <ligand>
        <name>glutathione</name>
        <dbReference type="ChEBI" id="CHEBI:57925"/>
    </ligand>
</feature>
<feature type="binding site" evidence="1">
    <location>
        <begin position="55"/>
        <end position="56"/>
    </location>
    <ligand>
        <name>glutathione</name>
        <dbReference type="ChEBI" id="CHEBI:57925"/>
    </ligand>
</feature>
<feature type="binding site" evidence="1">
    <location>
        <begin position="68"/>
        <end position="69"/>
    </location>
    <ligand>
        <name>glutathione</name>
        <dbReference type="ChEBI" id="CHEBI:57925"/>
    </ligand>
</feature>
<feature type="sequence conflict" description="In Ref. 4; AAM63061." evidence="2" ref="4">
    <original>G</original>
    <variation>C</variation>
    <location>
        <position position="177"/>
    </location>
</feature>
<comment type="function">
    <text evidence="1">May be involved in the conjugation of reduced glutathione to a wide number of exogenous and endogenous hydrophobic electrophiles and have a detoxification role against certain herbicides.</text>
</comment>
<comment type="catalytic activity">
    <reaction>
        <text>RX + glutathione = an S-substituted glutathione + a halide anion + H(+)</text>
        <dbReference type="Rhea" id="RHEA:16437"/>
        <dbReference type="ChEBI" id="CHEBI:15378"/>
        <dbReference type="ChEBI" id="CHEBI:16042"/>
        <dbReference type="ChEBI" id="CHEBI:17792"/>
        <dbReference type="ChEBI" id="CHEBI:57925"/>
        <dbReference type="ChEBI" id="CHEBI:90779"/>
        <dbReference type="EC" id="2.5.1.18"/>
    </reaction>
</comment>
<comment type="subcellular location">
    <subcellularLocation>
        <location evidence="2">Cytoplasm</location>
        <location evidence="2">Cytosol</location>
    </subcellularLocation>
</comment>
<comment type="similarity">
    <text evidence="2">Belongs to the GST superfamily. Tau family.</text>
</comment>
<proteinExistence type="evidence at transcript level"/>
<dbReference type="EC" id="2.5.1.18"/>
<dbReference type="EMBL" id="AL162691">
    <property type="protein sequence ID" value="CAB83152.1"/>
    <property type="molecule type" value="Genomic_DNA"/>
</dbReference>
<dbReference type="EMBL" id="CP002686">
    <property type="protein sequence ID" value="AEE77830.1"/>
    <property type="molecule type" value="Genomic_DNA"/>
</dbReference>
<dbReference type="EMBL" id="AF370274">
    <property type="protein sequence ID" value="AAK44089.1"/>
    <property type="molecule type" value="mRNA"/>
</dbReference>
<dbReference type="EMBL" id="AY062941">
    <property type="protein sequence ID" value="AAL33771.1"/>
    <property type="molecule type" value="mRNA"/>
</dbReference>
<dbReference type="EMBL" id="AY085847">
    <property type="protein sequence ID" value="AAM63061.1"/>
    <property type="molecule type" value="mRNA"/>
</dbReference>
<dbReference type="PIR" id="T47416">
    <property type="entry name" value="T47416"/>
</dbReference>
<dbReference type="RefSeq" id="NP_189966.1">
    <property type="nucleotide sequence ID" value="NM_114248.4"/>
</dbReference>
<dbReference type="SMR" id="Q9LZG7"/>
<dbReference type="FunCoup" id="Q9LZG7">
    <property type="interactions" value="160"/>
</dbReference>
<dbReference type="STRING" id="3702.Q9LZG7"/>
<dbReference type="PaxDb" id="3702-AT3G43800.1"/>
<dbReference type="ProteomicsDB" id="247345"/>
<dbReference type="EnsemblPlants" id="AT3G43800.1">
    <property type="protein sequence ID" value="AT3G43800.1"/>
    <property type="gene ID" value="AT3G43800"/>
</dbReference>
<dbReference type="GeneID" id="823491"/>
<dbReference type="Gramene" id="AT3G43800.1">
    <property type="protein sequence ID" value="AT3G43800.1"/>
    <property type="gene ID" value="AT3G43800"/>
</dbReference>
<dbReference type="KEGG" id="ath:AT3G43800"/>
<dbReference type="Araport" id="AT3G43800"/>
<dbReference type="TAIR" id="AT3G43800">
    <property type="gene designation" value="GSTU27"/>
</dbReference>
<dbReference type="eggNOG" id="KOG0406">
    <property type="taxonomic scope" value="Eukaryota"/>
</dbReference>
<dbReference type="HOGENOM" id="CLU_011226_18_1_1"/>
<dbReference type="InParanoid" id="Q9LZG7"/>
<dbReference type="OMA" id="WIRKCLT"/>
<dbReference type="PhylomeDB" id="Q9LZG7"/>
<dbReference type="BioCyc" id="ARA:AT3G43800-MONOMER"/>
<dbReference type="PRO" id="PR:Q9LZG7"/>
<dbReference type="Proteomes" id="UP000006548">
    <property type="component" value="Chromosome 3"/>
</dbReference>
<dbReference type="ExpressionAtlas" id="Q9LZG7">
    <property type="expression patterns" value="baseline and differential"/>
</dbReference>
<dbReference type="GO" id="GO:0005737">
    <property type="term" value="C:cytoplasm"/>
    <property type="evidence" value="ECO:0000303"/>
    <property type="project" value="TAIR"/>
</dbReference>
<dbReference type="GO" id="GO:0005829">
    <property type="term" value="C:cytosol"/>
    <property type="evidence" value="ECO:0007669"/>
    <property type="project" value="UniProtKB-SubCell"/>
</dbReference>
<dbReference type="GO" id="GO:0004364">
    <property type="term" value="F:glutathione transferase activity"/>
    <property type="evidence" value="ECO:0000314"/>
    <property type="project" value="TAIR"/>
</dbReference>
<dbReference type="GO" id="GO:0006749">
    <property type="term" value="P:glutathione metabolic process"/>
    <property type="evidence" value="ECO:0000314"/>
    <property type="project" value="TAIR"/>
</dbReference>
<dbReference type="GO" id="GO:0009407">
    <property type="term" value="P:toxin catabolic process"/>
    <property type="evidence" value="ECO:0000304"/>
    <property type="project" value="TAIR"/>
</dbReference>
<dbReference type="CDD" id="cd03185">
    <property type="entry name" value="GST_C_Tau"/>
    <property type="match status" value="1"/>
</dbReference>
<dbReference type="CDD" id="cd03058">
    <property type="entry name" value="GST_N_Tau"/>
    <property type="match status" value="1"/>
</dbReference>
<dbReference type="FunFam" id="1.20.1050.10:FF:000018">
    <property type="entry name" value="Glutathione S-transferase U20"/>
    <property type="match status" value="1"/>
</dbReference>
<dbReference type="FunFam" id="3.40.30.10:FF:000014">
    <property type="entry name" value="Tau class glutathione S-transferase"/>
    <property type="match status" value="1"/>
</dbReference>
<dbReference type="Gene3D" id="1.20.1050.10">
    <property type="match status" value="1"/>
</dbReference>
<dbReference type="Gene3D" id="3.40.30.10">
    <property type="entry name" value="Glutaredoxin"/>
    <property type="match status" value="1"/>
</dbReference>
<dbReference type="InterPro" id="IPR010987">
    <property type="entry name" value="Glutathione-S-Trfase_C-like"/>
</dbReference>
<dbReference type="InterPro" id="IPR036282">
    <property type="entry name" value="Glutathione-S-Trfase_C_sf"/>
</dbReference>
<dbReference type="InterPro" id="IPR040079">
    <property type="entry name" value="Glutathione_S-Trfase"/>
</dbReference>
<dbReference type="InterPro" id="IPR004045">
    <property type="entry name" value="Glutathione_S-Trfase_N"/>
</dbReference>
<dbReference type="InterPro" id="IPR045074">
    <property type="entry name" value="GST_C_Tau"/>
</dbReference>
<dbReference type="InterPro" id="IPR045073">
    <property type="entry name" value="Omega/Tau-like"/>
</dbReference>
<dbReference type="InterPro" id="IPR036249">
    <property type="entry name" value="Thioredoxin-like_sf"/>
</dbReference>
<dbReference type="PANTHER" id="PTHR11260:SF750">
    <property type="entry name" value="GLUTATHIONE S-TRANSFERASE U27"/>
    <property type="match status" value="1"/>
</dbReference>
<dbReference type="PANTHER" id="PTHR11260">
    <property type="entry name" value="GLUTATHIONE S-TRANSFERASE, GST, SUPERFAMILY, GST DOMAIN CONTAINING"/>
    <property type="match status" value="1"/>
</dbReference>
<dbReference type="Pfam" id="PF13410">
    <property type="entry name" value="GST_C_2"/>
    <property type="match status" value="1"/>
</dbReference>
<dbReference type="Pfam" id="PF02798">
    <property type="entry name" value="GST_N"/>
    <property type="match status" value="1"/>
</dbReference>
<dbReference type="SFLD" id="SFLDS00019">
    <property type="entry name" value="Glutathione_Transferase_(cytos"/>
    <property type="match status" value="1"/>
</dbReference>
<dbReference type="SFLD" id="SFLDG01152">
    <property type="entry name" value="Main.3:_Omega-_and_Tau-like"/>
    <property type="match status" value="1"/>
</dbReference>
<dbReference type="SUPFAM" id="SSF47616">
    <property type="entry name" value="GST C-terminal domain-like"/>
    <property type="match status" value="1"/>
</dbReference>
<dbReference type="SUPFAM" id="SSF52833">
    <property type="entry name" value="Thioredoxin-like"/>
    <property type="match status" value="1"/>
</dbReference>
<dbReference type="PROSITE" id="PS50405">
    <property type="entry name" value="GST_CTER"/>
    <property type="match status" value="1"/>
</dbReference>
<dbReference type="PROSITE" id="PS50404">
    <property type="entry name" value="GST_NTER"/>
    <property type="match status" value="1"/>
</dbReference>
<name>GSTUR_ARATH</name>
<organism>
    <name type="scientific">Arabidopsis thaliana</name>
    <name type="common">Mouse-ear cress</name>
    <dbReference type="NCBI Taxonomy" id="3702"/>
    <lineage>
        <taxon>Eukaryota</taxon>
        <taxon>Viridiplantae</taxon>
        <taxon>Streptophyta</taxon>
        <taxon>Embryophyta</taxon>
        <taxon>Tracheophyta</taxon>
        <taxon>Spermatophyta</taxon>
        <taxon>Magnoliopsida</taxon>
        <taxon>eudicotyledons</taxon>
        <taxon>Gunneridae</taxon>
        <taxon>Pentapetalae</taxon>
        <taxon>rosids</taxon>
        <taxon>malvids</taxon>
        <taxon>Brassicales</taxon>
        <taxon>Brassicaceae</taxon>
        <taxon>Camelineae</taxon>
        <taxon>Arabidopsis</taxon>
    </lineage>
</organism>
<evidence type="ECO:0000250" key="1"/>
<evidence type="ECO:0000305" key="2"/>
<reference key="1">
    <citation type="journal article" date="2000" name="Nature">
        <title>Sequence and analysis of chromosome 3 of the plant Arabidopsis thaliana.</title>
        <authorList>
            <person name="Salanoubat M."/>
            <person name="Lemcke K."/>
            <person name="Rieger M."/>
            <person name="Ansorge W."/>
            <person name="Unseld M."/>
            <person name="Fartmann B."/>
            <person name="Valle G."/>
            <person name="Bloecker H."/>
            <person name="Perez-Alonso M."/>
            <person name="Obermaier B."/>
            <person name="Delseny M."/>
            <person name="Boutry M."/>
            <person name="Grivell L.A."/>
            <person name="Mache R."/>
            <person name="Puigdomenech P."/>
            <person name="De Simone V."/>
            <person name="Choisne N."/>
            <person name="Artiguenave F."/>
            <person name="Robert C."/>
            <person name="Brottier P."/>
            <person name="Wincker P."/>
            <person name="Cattolico L."/>
            <person name="Weissenbach J."/>
            <person name="Saurin W."/>
            <person name="Quetier F."/>
            <person name="Schaefer M."/>
            <person name="Mueller-Auer S."/>
            <person name="Gabel C."/>
            <person name="Fuchs M."/>
            <person name="Benes V."/>
            <person name="Wurmbach E."/>
            <person name="Drzonek H."/>
            <person name="Erfle H."/>
            <person name="Jordan N."/>
            <person name="Bangert S."/>
            <person name="Wiedelmann R."/>
            <person name="Kranz H."/>
            <person name="Voss H."/>
            <person name="Holland R."/>
            <person name="Brandt P."/>
            <person name="Nyakatura G."/>
            <person name="Vezzi A."/>
            <person name="D'Angelo M."/>
            <person name="Pallavicini A."/>
            <person name="Toppo S."/>
            <person name="Simionati B."/>
            <person name="Conrad A."/>
            <person name="Hornischer K."/>
            <person name="Kauer G."/>
            <person name="Loehnert T.-H."/>
            <person name="Nordsiek G."/>
            <person name="Reichelt J."/>
            <person name="Scharfe M."/>
            <person name="Schoen O."/>
            <person name="Bargues M."/>
            <person name="Terol J."/>
            <person name="Climent J."/>
            <person name="Navarro P."/>
            <person name="Collado C."/>
            <person name="Perez-Perez A."/>
            <person name="Ottenwaelder B."/>
            <person name="Duchemin D."/>
            <person name="Cooke R."/>
            <person name="Laudie M."/>
            <person name="Berger-Llauro C."/>
            <person name="Purnelle B."/>
            <person name="Masuy D."/>
            <person name="de Haan M."/>
            <person name="Maarse A.C."/>
            <person name="Alcaraz J.-P."/>
            <person name="Cottet A."/>
            <person name="Casacuberta E."/>
            <person name="Monfort A."/>
            <person name="Argiriou A."/>
            <person name="Flores M."/>
            <person name="Liguori R."/>
            <person name="Vitale D."/>
            <person name="Mannhaupt G."/>
            <person name="Haase D."/>
            <person name="Schoof H."/>
            <person name="Rudd S."/>
            <person name="Zaccaria P."/>
            <person name="Mewes H.-W."/>
            <person name="Mayer K.F.X."/>
            <person name="Kaul S."/>
            <person name="Town C.D."/>
            <person name="Koo H.L."/>
            <person name="Tallon L.J."/>
            <person name="Jenkins J."/>
            <person name="Rooney T."/>
            <person name="Rizzo M."/>
            <person name="Walts A."/>
            <person name="Utterback T."/>
            <person name="Fujii C.Y."/>
            <person name="Shea T.P."/>
            <person name="Creasy T.H."/>
            <person name="Haas B."/>
            <person name="Maiti R."/>
            <person name="Wu D."/>
            <person name="Peterson J."/>
            <person name="Van Aken S."/>
            <person name="Pai G."/>
            <person name="Militscher J."/>
            <person name="Sellers P."/>
            <person name="Gill J.E."/>
            <person name="Feldblyum T.V."/>
            <person name="Preuss D."/>
            <person name="Lin X."/>
            <person name="Nierman W.C."/>
            <person name="Salzberg S.L."/>
            <person name="White O."/>
            <person name="Venter J.C."/>
            <person name="Fraser C.M."/>
            <person name="Kaneko T."/>
            <person name="Nakamura Y."/>
            <person name="Sato S."/>
            <person name="Kato T."/>
            <person name="Asamizu E."/>
            <person name="Sasamoto S."/>
            <person name="Kimura T."/>
            <person name="Idesawa K."/>
            <person name="Kawashima K."/>
            <person name="Kishida Y."/>
            <person name="Kiyokawa C."/>
            <person name="Kohara M."/>
            <person name="Matsumoto M."/>
            <person name="Matsuno A."/>
            <person name="Muraki A."/>
            <person name="Nakayama S."/>
            <person name="Nakazaki N."/>
            <person name="Shinpo S."/>
            <person name="Takeuchi C."/>
            <person name="Wada T."/>
            <person name="Watanabe A."/>
            <person name="Yamada M."/>
            <person name="Yasuda M."/>
            <person name="Tabata S."/>
        </authorList>
    </citation>
    <scope>NUCLEOTIDE SEQUENCE [LARGE SCALE GENOMIC DNA]</scope>
    <source>
        <strain>cv. Columbia</strain>
    </source>
</reference>
<reference key="2">
    <citation type="journal article" date="2017" name="Plant J.">
        <title>Araport11: a complete reannotation of the Arabidopsis thaliana reference genome.</title>
        <authorList>
            <person name="Cheng C.Y."/>
            <person name="Krishnakumar V."/>
            <person name="Chan A.P."/>
            <person name="Thibaud-Nissen F."/>
            <person name="Schobel S."/>
            <person name="Town C.D."/>
        </authorList>
    </citation>
    <scope>GENOME REANNOTATION</scope>
    <source>
        <strain>cv. Columbia</strain>
    </source>
</reference>
<reference key="3">
    <citation type="journal article" date="2003" name="Science">
        <title>Empirical analysis of transcriptional activity in the Arabidopsis genome.</title>
        <authorList>
            <person name="Yamada K."/>
            <person name="Lim J."/>
            <person name="Dale J.M."/>
            <person name="Chen H."/>
            <person name="Shinn P."/>
            <person name="Palm C.J."/>
            <person name="Southwick A.M."/>
            <person name="Wu H.C."/>
            <person name="Kim C.J."/>
            <person name="Nguyen M."/>
            <person name="Pham P.K."/>
            <person name="Cheuk R.F."/>
            <person name="Karlin-Newmann G."/>
            <person name="Liu S.X."/>
            <person name="Lam B."/>
            <person name="Sakano H."/>
            <person name="Wu T."/>
            <person name="Yu G."/>
            <person name="Miranda M."/>
            <person name="Quach H.L."/>
            <person name="Tripp M."/>
            <person name="Chang C.H."/>
            <person name="Lee J.M."/>
            <person name="Toriumi M.J."/>
            <person name="Chan M.M."/>
            <person name="Tang C.C."/>
            <person name="Onodera C.S."/>
            <person name="Deng J.M."/>
            <person name="Akiyama K."/>
            <person name="Ansari Y."/>
            <person name="Arakawa T."/>
            <person name="Banh J."/>
            <person name="Banno F."/>
            <person name="Bowser L."/>
            <person name="Brooks S.Y."/>
            <person name="Carninci P."/>
            <person name="Chao Q."/>
            <person name="Choy N."/>
            <person name="Enju A."/>
            <person name="Goldsmith A.D."/>
            <person name="Gurjal M."/>
            <person name="Hansen N.F."/>
            <person name="Hayashizaki Y."/>
            <person name="Johnson-Hopson C."/>
            <person name="Hsuan V.W."/>
            <person name="Iida K."/>
            <person name="Karnes M."/>
            <person name="Khan S."/>
            <person name="Koesema E."/>
            <person name="Ishida J."/>
            <person name="Jiang P.X."/>
            <person name="Jones T."/>
            <person name="Kawai J."/>
            <person name="Kamiya A."/>
            <person name="Meyers C."/>
            <person name="Nakajima M."/>
            <person name="Narusaka M."/>
            <person name="Seki M."/>
            <person name="Sakurai T."/>
            <person name="Satou M."/>
            <person name="Tamse R."/>
            <person name="Vaysberg M."/>
            <person name="Wallender E.K."/>
            <person name="Wong C."/>
            <person name="Yamamura Y."/>
            <person name="Yuan S."/>
            <person name="Shinozaki K."/>
            <person name="Davis R.W."/>
            <person name="Theologis A."/>
            <person name="Ecker J.R."/>
        </authorList>
    </citation>
    <scope>NUCLEOTIDE SEQUENCE [LARGE SCALE MRNA]</scope>
    <source>
        <strain>cv. Columbia</strain>
    </source>
</reference>
<reference key="4">
    <citation type="submission" date="2002-03" db="EMBL/GenBank/DDBJ databases">
        <title>Full-length cDNA from Arabidopsis thaliana.</title>
        <authorList>
            <person name="Brover V.V."/>
            <person name="Troukhan M.E."/>
            <person name="Alexandrov N.A."/>
            <person name="Lu Y.-P."/>
            <person name="Flavell R.B."/>
            <person name="Feldmann K.A."/>
        </authorList>
    </citation>
    <scope>NUCLEOTIDE SEQUENCE [LARGE SCALE MRNA]</scope>
</reference>
<reference key="5">
    <citation type="journal article" date="2002" name="Plant Mol. Biol.">
        <title>Probing the diversity of the Arabidopsis glutathione S-transferase gene family.</title>
        <authorList>
            <person name="Wagner U."/>
            <person name="Edwards R."/>
            <person name="Dixon D.P."/>
            <person name="Mauch F."/>
        </authorList>
    </citation>
    <scope>GENE FAMILY</scope>
    <scope>NOMENCLATURE</scope>
</reference>
<keyword id="KW-0963">Cytoplasm</keyword>
<keyword id="KW-0216">Detoxification</keyword>
<keyword id="KW-1185">Reference proteome</keyword>
<keyword id="KW-0808">Transferase</keyword>
<gene>
    <name type="primary">GSTU27</name>
    <name type="ordered locus">At3g43800</name>
    <name type="ORF">T28A8.90</name>
</gene>
<sequence>MSEEEVVVLNFWPSMFGARVIMALEEKEIKFEYKEEDVFGQKTDLLLQSNPVNKKIPVLIHNGKPVCESNIIVEYIDEVWKDDKTLRLLPSDPYQKSQCRFWADLIDKKVFDAGRRTWTKRGKEQEEAKQEFIEILKVLERELGDKVYFGGNDNVSMVDLVLISYYPWFHTWETIGGFSVEDHTPKLMDWIRKCLTRPAISKSLPDPLKIFDRVTQIIKVHEFFYGY</sequence>